<proteinExistence type="inferred from homology"/>
<name>TRMD_BURP6</name>
<keyword id="KW-0963">Cytoplasm</keyword>
<keyword id="KW-0489">Methyltransferase</keyword>
<keyword id="KW-0949">S-adenosyl-L-methionine</keyword>
<keyword id="KW-0808">Transferase</keyword>
<keyword id="KW-0819">tRNA processing</keyword>
<comment type="function">
    <text evidence="1">Specifically methylates guanosine-37 in various tRNAs.</text>
</comment>
<comment type="catalytic activity">
    <reaction evidence="1">
        <text>guanosine(37) in tRNA + S-adenosyl-L-methionine = N(1)-methylguanosine(37) in tRNA + S-adenosyl-L-homocysteine + H(+)</text>
        <dbReference type="Rhea" id="RHEA:36899"/>
        <dbReference type="Rhea" id="RHEA-COMP:10145"/>
        <dbReference type="Rhea" id="RHEA-COMP:10147"/>
        <dbReference type="ChEBI" id="CHEBI:15378"/>
        <dbReference type="ChEBI" id="CHEBI:57856"/>
        <dbReference type="ChEBI" id="CHEBI:59789"/>
        <dbReference type="ChEBI" id="CHEBI:73542"/>
        <dbReference type="ChEBI" id="CHEBI:74269"/>
        <dbReference type="EC" id="2.1.1.228"/>
    </reaction>
</comment>
<comment type="subunit">
    <text evidence="1">Homodimer.</text>
</comment>
<comment type="subcellular location">
    <subcellularLocation>
        <location evidence="1">Cytoplasm</location>
    </subcellularLocation>
</comment>
<comment type="similarity">
    <text evidence="1">Belongs to the RNA methyltransferase TrmD family.</text>
</comment>
<evidence type="ECO:0000255" key="1">
    <source>
        <dbReference type="HAMAP-Rule" id="MF_00605"/>
    </source>
</evidence>
<organism>
    <name type="scientific">Burkholderia pseudomallei (strain 668)</name>
    <dbReference type="NCBI Taxonomy" id="320373"/>
    <lineage>
        <taxon>Bacteria</taxon>
        <taxon>Pseudomonadati</taxon>
        <taxon>Pseudomonadota</taxon>
        <taxon>Betaproteobacteria</taxon>
        <taxon>Burkholderiales</taxon>
        <taxon>Burkholderiaceae</taxon>
        <taxon>Burkholderia</taxon>
        <taxon>pseudomallei group</taxon>
    </lineage>
</organism>
<gene>
    <name evidence="1" type="primary">trmD</name>
    <name type="ordered locus">BURPS668_2857</name>
</gene>
<feature type="chain" id="PRO_1000006461" description="tRNA (guanine-N(1)-)-methyltransferase">
    <location>
        <begin position="1"/>
        <end position="264"/>
    </location>
</feature>
<feature type="binding site" evidence="1">
    <location>
        <position position="125"/>
    </location>
    <ligand>
        <name>S-adenosyl-L-methionine</name>
        <dbReference type="ChEBI" id="CHEBI:59789"/>
    </ligand>
</feature>
<feature type="binding site" evidence="1">
    <location>
        <begin position="145"/>
        <end position="150"/>
    </location>
    <ligand>
        <name>S-adenosyl-L-methionine</name>
        <dbReference type="ChEBI" id="CHEBI:59789"/>
    </ligand>
</feature>
<accession>A3NC05</accession>
<reference key="1">
    <citation type="journal article" date="2010" name="Genome Biol. Evol.">
        <title>Continuing evolution of Burkholderia mallei through genome reduction and large-scale rearrangements.</title>
        <authorList>
            <person name="Losada L."/>
            <person name="Ronning C.M."/>
            <person name="DeShazer D."/>
            <person name="Woods D."/>
            <person name="Fedorova N."/>
            <person name="Kim H.S."/>
            <person name="Shabalina S.A."/>
            <person name="Pearson T.R."/>
            <person name="Brinkac L."/>
            <person name="Tan P."/>
            <person name="Nandi T."/>
            <person name="Crabtree J."/>
            <person name="Badger J."/>
            <person name="Beckstrom-Sternberg S."/>
            <person name="Saqib M."/>
            <person name="Schutzer S.E."/>
            <person name="Keim P."/>
            <person name="Nierman W.C."/>
        </authorList>
    </citation>
    <scope>NUCLEOTIDE SEQUENCE [LARGE SCALE GENOMIC DNA]</scope>
    <source>
        <strain>668</strain>
    </source>
</reference>
<dbReference type="EC" id="2.1.1.228" evidence="1"/>
<dbReference type="EMBL" id="CP000570">
    <property type="protein sequence ID" value="ABN82360.1"/>
    <property type="molecule type" value="Genomic_DNA"/>
</dbReference>
<dbReference type="RefSeq" id="WP_004189914.1">
    <property type="nucleotide sequence ID" value="NC_009074.1"/>
</dbReference>
<dbReference type="SMR" id="A3NC05"/>
<dbReference type="GeneID" id="93061077"/>
<dbReference type="KEGG" id="bpd:BURPS668_2857"/>
<dbReference type="HOGENOM" id="CLU_047363_0_2_4"/>
<dbReference type="GO" id="GO:0005829">
    <property type="term" value="C:cytosol"/>
    <property type="evidence" value="ECO:0007669"/>
    <property type="project" value="TreeGrafter"/>
</dbReference>
<dbReference type="GO" id="GO:0052906">
    <property type="term" value="F:tRNA (guanine(37)-N1)-methyltransferase activity"/>
    <property type="evidence" value="ECO:0007669"/>
    <property type="project" value="UniProtKB-UniRule"/>
</dbReference>
<dbReference type="GO" id="GO:0002939">
    <property type="term" value="P:tRNA N1-guanine methylation"/>
    <property type="evidence" value="ECO:0007669"/>
    <property type="project" value="TreeGrafter"/>
</dbReference>
<dbReference type="CDD" id="cd18080">
    <property type="entry name" value="TrmD-like"/>
    <property type="match status" value="1"/>
</dbReference>
<dbReference type="FunFam" id="1.10.1270.20:FF:000001">
    <property type="entry name" value="tRNA (guanine-N(1)-)-methyltransferase"/>
    <property type="match status" value="1"/>
</dbReference>
<dbReference type="FunFam" id="3.40.1280.10:FF:000001">
    <property type="entry name" value="tRNA (guanine-N(1)-)-methyltransferase"/>
    <property type="match status" value="1"/>
</dbReference>
<dbReference type="Gene3D" id="3.40.1280.10">
    <property type="match status" value="1"/>
</dbReference>
<dbReference type="Gene3D" id="1.10.1270.20">
    <property type="entry name" value="tRNA(m1g37)methyltransferase, domain 2"/>
    <property type="match status" value="1"/>
</dbReference>
<dbReference type="HAMAP" id="MF_00605">
    <property type="entry name" value="TrmD"/>
    <property type="match status" value="1"/>
</dbReference>
<dbReference type="InterPro" id="IPR029028">
    <property type="entry name" value="Alpha/beta_knot_MTases"/>
</dbReference>
<dbReference type="InterPro" id="IPR023148">
    <property type="entry name" value="tRNA_m1G_MeTrfase_C_sf"/>
</dbReference>
<dbReference type="InterPro" id="IPR002649">
    <property type="entry name" value="tRNA_m1G_MeTrfase_TrmD"/>
</dbReference>
<dbReference type="InterPro" id="IPR029026">
    <property type="entry name" value="tRNA_m1G_MTases_N"/>
</dbReference>
<dbReference type="InterPro" id="IPR016009">
    <property type="entry name" value="tRNA_MeTrfase_TRMD/TRM10"/>
</dbReference>
<dbReference type="NCBIfam" id="NF000648">
    <property type="entry name" value="PRK00026.1"/>
    <property type="match status" value="1"/>
</dbReference>
<dbReference type="NCBIfam" id="TIGR00088">
    <property type="entry name" value="trmD"/>
    <property type="match status" value="1"/>
</dbReference>
<dbReference type="PANTHER" id="PTHR46417">
    <property type="entry name" value="TRNA (GUANINE-N(1)-)-METHYLTRANSFERASE"/>
    <property type="match status" value="1"/>
</dbReference>
<dbReference type="PANTHER" id="PTHR46417:SF1">
    <property type="entry name" value="TRNA (GUANINE-N(1)-)-METHYLTRANSFERASE"/>
    <property type="match status" value="1"/>
</dbReference>
<dbReference type="Pfam" id="PF01746">
    <property type="entry name" value="tRNA_m1G_MT"/>
    <property type="match status" value="1"/>
</dbReference>
<dbReference type="PIRSF" id="PIRSF000386">
    <property type="entry name" value="tRNA_mtase"/>
    <property type="match status" value="1"/>
</dbReference>
<dbReference type="SUPFAM" id="SSF75217">
    <property type="entry name" value="alpha/beta knot"/>
    <property type="match status" value="1"/>
</dbReference>
<protein>
    <recommendedName>
        <fullName evidence="1">tRNA (guanine-N(1)-)-methyltransferase</fullName>
        <ecNumber evidence="1">2.1.1.228</ecNumber>
    </recommendedName>
    <alternativeName>
        <fullName evidence="1">M1G-methyltransferase</fullName>
    </alternativeName>
    <alternativeName>
        <fullName evidence="1">tRNA [GM37] methyltransferase</fullName>
    </alternativeName>
</protein>
<sequence>MDEATQSAIQFDVVTLFPEMFRALTDWGITSRAVKQGRFGLRTWNPRDFTTDNYRTVDDRPYGGGPGMVMLAKPLEAAIGAAKAAQAAQGVATSRVVMMSPQGAPLTHERVARMAAEPGVVLLCGRYEAIDQRLIDRCVDEELSLGDFVLSGGELPAMALMDAVVRLLPGVLNDAQSAVQDSFADGLLDCPHYTRPEEYEGVRVPDVLLGGHHAEIERWRRQEALRNTIAKRPDLIARARREKLLSRADEAWLASLAKEAKQAS</sequence>